<proteinExistence type="inferred from homology"/>
<sequence length="370" mass="41001">MTAQSRDPAWTDASPTFQPTMRHDWSLEEIEALFALPFNDLLFRAQQVHRAHFDPNAVQVSTLLSIKTGACPEDCKYCPQSGHYNTGLGKEKLLEIEKVVEQARAAKAAGASRFCMGAAWRSPREKDLRVVTEMVGRVKALGLETCMTLGMVDVDQARRLAEAGLDYYNHNLDTSPDYYGEIITTRTYADRLETLANVREAGMKVCSGGILGMGEAPRDRAALLQQLVRLDPHPESVPINMLVKVPGTPMENVEDMDPLTFIRAIAVARILMPKSHVRLSAGREQMDESTQALAFLAGANSIFYGDTLLTTGNPQVERDRALFDKLGLHPEPSDPHADDAHRDDEQAEIALAHAIQRQRDDALFYDATRG</sequence>
<protein>
    <recommendedName>
        <fullName evidence="1">Biotin synthase</fullName>
        <ecNumber evidence="1">2.8.1.6</ecNumber>
    </recommendedName>
</protein>
<evidence type="ECO:0000255" key="1">
    <source>
        <dbReference type="HAMAP-Rule" id="MF_01694"/>
    </source>
</evidence>
<evidence type="ECO:0000255" key="2">
    <source>
        <dbReference type="PROSITE-ProRule" id="PRU01266"/>
    </source>
</evidence>
<evidence type="ECO:0000256" key="3">
    <source>
        <dbReference type="SAM" id="MobiDB-lite"/>
    </source>
</evidence>
<gene>
    <name evidence="1" type="primary">bioB</name>
    <name type="ordered locus">Csal_1167</name>
</gene>
<name>BIOB_CHRSD</name>
<accession>Q1QYD5</accession>
<feature type="chain" id="PRO_0000381305" description="Biotin synthase">
    <location>
        <begin position="1"/>
        <end position="370"/>
    </location>
</feature>
<feature type="domain" description="Radical SAM core" evidence="2">
    <location>
        <begin position="56"/>
        <end position="283"/>
    </location>
</feature>
<feature type="region of interest" description="Disordered" evidence="3">
    <location>
        <begin position="327"/>
        <end position="346"/>
    </location>
</feature>
<feature type="compositionally biased region" description="Basic and acidic residues" evidence="3">
    <location>
        <begin position="327"/>
        <end position="344"/>
    </location>
</feature>
<feature type="binding site" evidence="1">
    <location>
        <position position="71"/>
    </location>
    <ligand>
        <name>[4Fe-4S] cluster</name>
        <dbReference type="ChEBI" id="CHEBI:49883"/>
        <note>4Fe-4S-S-AdoMet</note>
    </ligand>
</feature>
<feature type="binding site" evidence="1">
    <location>
        <position position="75"/>
    </location>
    <ligand>
        <name>[4Fe-4S] cluster</name>
        <dbReference type="ChEBI" id="CHEBI:49883"/>
        <note>4Fe-4S-S-AdoMet</note>
    </ligand>
</feature>
<feature type="binding site" evidence="1">
    <location>
        <position position="78"/>
    </location>
    <ligand>
        <name>[4Fe-4S] cluster</name>
        <dbReference type="ChEBI" id="CHEBI:49883"/>
        <note>4Fe-4S-S-AdoMet</note>
    </ligand>
</feature>
<feature type="binding site" evidence="1">
    <location>
        <position position="115"/>
    </location>
    <ligand>
        <name>[2Fe-2S] cluster</name>
        <dbReference type="ChEBI" id="CHEBI:190135"/>
    </ligand>
</feature>
<feature type="binding site" evidence="1">
    <location>
        <position position="146"/>
    </location>
    <ligand>
        <name>[2Fe-2S] cluster</name>
        <dbReference type="ChEBI" id="CHEBI:190135"/>
    </ligand>
</feature>
<feature type="binding site" evidence="1">
    <location>
        <position position="206"/>
    </location>
    <ligand>
        <name>[2Fe-2S] cluster</name>
        <dbReference type="ChEBI" id="CHEBI:190135"/>
    </ligand>
</feature>
<feature type="binding site" evidence="1">
    <location>
        <position position="278"/>
    </location>
    <ligand>
        <name>[2Fe-2S] cluster</name>
        <dbReference type="ChEBI" id="CHEBI:190135"/>
    </ligand>
</feature>
<reference key="1">
    <citation type="journal article" date="2011" name="Stand. Genomic Sci.">
        <title>Complete genome sequence of the halophilic and highly halotolerant Chromohalobacter salexigens type strain (1H11(T)).</title>
        <authorList>
            <person name="Copeland A."/>
            <person name="O'Connor K."/>
            <person name="Lucas S."/>
            <person name="Lapidus A."/>
            <person name="Berry K.W."/>
            <person name="Detter J.C."/>
            <person name="Del Rio T.G."/>
            <person name="Hammon N."/>
            <person name="Dalin E."/>
            <person name="Tice H."/>
            <person name="Pitluck S."/>
            <person name="Bruce D."/>
            <person name="Goodwin L."/>
            <person name="Han C."/>
            <person name="Tapia R."/>
            <person name="Saunders E."/>
            <person name="Schmutz J."/>
            <person name="Brettin T."/>
            <person name="Larimer F."/>
            <person name="Land M."/>
            <person name="Hauser L."/>
            <person name="Vargas C."/>
            <person name="Nieto J.J."/>
            <person name="Kyrpides N.C."/>
            <person name="Ivanova N."/>
            <person name="Goker M."/>
            <person name="Klenk H.P."/>
            <person name="Csonka L.N."/>
            <person name="Woyke T."/>
        </authorList>
    </citation>
    <scope>NUCLEOTIDE SEQUENCE [LARGE SCALE GENOMIC DNA]</scope>
    <source>
        <strain>ATCC BAA-138 / DSM 3043 / CIP 106854 / NCIMB 13768 / 1H11</strain>
    </source>
</reference>
<organism>
    <name type="scientific">Chromohalobacter salexigens (strain ATCC BAA-138 / DSM 3043 / CIP 106854 / NCIMB 13768 / 1H11)</name>
    <dbReference type="NCBI Taxonomy" id="290398"/>
    <lineage>
        <taxon>Bacteria</taxon>
        <taxon>Pseudomonadati</taxon>
        <taxon>Pseudomonadota</taxon>
        <taxon>Gammaproteobacteria</taxon>
        <taxon>Oceanospirillales</taxon>
        <taxon>Halomonadaceae</taxon>
        <taxon>Chromohalobacter</taxon>
    </lineage>
</organism>
<comment type="function">
    <text evidence="1">Catalyzes the conversion of dethiobiotin (DTB) to biotin by the insertion of a sulfur atom into dethiobiotin via a radical-based mechanism.</text>
</comment>
<comment type="catalytic activity">
    <reaction evidence="1">
        <text>(4R,5S)-dethiobiotin + (sulfur carrier)-SH + 2 reduced [2Fe-2S]-[ferredoxin] + 2 S-adenosyl-L-methionine = (sulfur carrier)-H + biotin + 2 5'-deoxyadenosine + 2 L-methionine + 2 oxidized [2Fe-2S]-[ferredoxin]</text>
        <dbReference type="Rhea" id="RHEA:22060"/>
        <dbReference type="Rhea" id="RHEA-COMP:10000"/>
        <dbReference type="Rhea" id="RHEA-COMP:10001"/>
        <dbReference type="Rhea" id="RHEA-COMP:14737"/>
        <dbReference type="Rhea" id="RHEA-COMP:14739"/>
        <dbReference type="ChEBI" id="CHEBI:17319"/>
        <dbReference type="ChEBI" id="CHEBI:29917"/>
        <dbReference type="ChEBI" id="CHEBI:33737"/>
        <dbReference type="ChEBI" id="CHEBI:33738"/>
        <dbReference type="ChEBI" id="CHEBI:57586"/>
        <dbReference type="ChEBI" id="CHEBI:57844"/>
        <dbReference type="ChEBI" id="CHEBI:59789"/>
        <dbReference type="ChEBI" id="CHEBI:64428"/>
        <dbReference type="ChEBI" id="CHEBI:149473"/>
        <dbReference type="EC" id="2.8.1.6"/>
    </reaction>
</comment>
<comment type="cofactor">
    <cofactor evidence="1">
        <name>[4Fe-4S] cluster</name>
        <dbReference type="ChEBI" id="CHEBI:49883"/>
    </cofactor>
    <text evidence="1">Binds 1 [4Fe-4S] cluster. The cluster is coordinated with 3 cysteines and an exchangeable S-adenosyl-L-methionine.</text>
</comment>
<comment type="cofactor">
    <cofactor evidence="1">
        <name>[2Fe-2S] cluster</name>
        <dbReference type="ChEBI" id="CHEBI:190135"/>
    </cofactor>
    <text evidence="1">Binds 1 [2Fe-2S] cluster. The cluster is coordinated with 3 cysteines and 1 arginine.</text>
</comment>
<comment type="pathway">
    <text evidence="1">Cofactor biosynthesis; biotin biosynthesis; biotin from 7,8-diaminononanoate: step 2/2.</text>
</comment>
<comment type="subunit">
    <text evidence="1">Homodimer.</text>
</comment>
<comment type="similarity">
    <text evidence="1">Belongs to the radical SAM superfamily. Biotin synthase family.</text>
</comment>
<dbReference type="EC" id="2.8.1.6" evidence="1"/>
<dbReference type="EMBL" id="CP000285">
    <property type="protein sequence ID" value="ABE58523.1"/>
    <property type="molecule type" value="Genomic_DNA"/>
</dbReference>
<dbReference type="RefSeq" id="WP_011506469.1">
    <property type="nucleotide sequence ID" value="NC_007963.1"/>
</dbReference>
<dbReference type="SMR" id="Q1QYD5"/>
<dbReference type="STRING" id="290398.Csal_1167"/>
<dbReference type="GeneID" id="95333914"/>
<dbReference type="KEGG" id="csa:Csal_1167"/>
<dbReference type="eggNOG" id="COG0502">
    <property type="taxonomic scope" value="Bacteria"/>
</dbReference>
<dbReference type="HOGENOM" id="CLU_033172_1_2_6"/>
<dbReference type="UniPathway" id="UPA00078">
    <property type="reaction ID" value="UER00162"/>
</dbReference>
<dbReference type="Proteomes" id="UP000000239">
    <property type="component" value="Chromosome"/>
</dbReference>
<dbReference type="GO" id="GO:0051537">
    <property type="term" value="F:2 iron, 2 sulfur cluster binding"/>
    <property type="evidence" value="ECO:0007669"/>
    <property type="project" value="UniProtKB-KW"/>
</dbReference>
<dbReference type="GO" id="GO:0051539">
    <property type="term" value="F:4 iron, 4 sulfur cluster binding"/>
    <property type="evidence" value="ECO:0007669"/>
    <property type="project" value="UniProtKB-KW"/>
</dbReference>
<dbReference type="GO" id="GO:0004076">
    <property type="term" value="F:biotin synthase activity"/>
    <property type="evidence" value="ECO:0007669"/>
    <property type="project" value="UniProtKB-UniRule"/>
</dbReference>
<dbReference type="GO" id="GO:0005506">
    <property type="term" value="F:iron ion binding"/>
    <property type="evidence" value="ECO:0007669"/>
    <property type="project" value="UniProtKB-UniRule"/>
</dbReference>
<dbReference type="GO" id="GO:0009102">
    <property type="term" value="P:biotin biosynthetic process"/>
    <property type="evidence" value="ECO:0007669"/>
    <property type="project" value="UniProtKB-UniRule"/>
</dbReference>
<dbReference type="CDD" id="cd01335">
    <property type="entry name" value="Radical_SAM"/>
    <property type="match status" value="1"/>
</dbReference>
<dbReference type="FunFam" id="3.20.20.70:FF:000011">
    <property type="entry name" value="Biotin synthase"/>
    <property type="match status" value="1"/>
</dbReference>
<dbReference type="Gene3D" id="3.20.20.70">
    <property type="entry name" value="Aldolase class I"/>
    <property type="match status" value="1"/>
</dbReference>
<dbReference type="HAMAP" id="MF_01694">
    <property type="entry name" value="BioB"/>
    <property type="match status" value="1"/>
</dbReference>
<dbReference type="InterPro" id="IPR013785">
    <property type="entry name" value="Aldolase_TIM"/>
</dbReference>
<dbReference type="InterPro" id="IPR010722">
    <property type="entry name" value="BATS_dom"/>
</dbReference>
<dbReference type="InterPro" id="IPR002684">
    <property type="entry name" value="Biotin_synth/BioAB"/>
</dbReference>
<dbReference type="InterPro" id="IPR024177">
    <property type="entry name" value="Biotin_synthase"/>
</dbReference>
<dbReference type="InterPro" id="IPR006638">
    <property type="entry name" value="Elp3/MiaA/NifB-like_rSAM"/>
</dbReference>
<dbReference type="InterPro" id="IPR007197">
    <property type="entry name" value="rSAM"/>
</dbReference>
<dbReference type="NCBIfam" id="TIGR00433">
    <property type="entry name" value="bioB"/>
    <property type="match status" value="1"/>
</dbReference>
<dbReference type="PANTHER" id="PTHR22976">
    <property type="entry name" value="BIOTIN SYNTHASE"/>
    <property type="match status" value="1"/>
</dbReference>
<dbReference type="PANTHER" id="PTHR22976:SF2">
    <property type="entry name" value="BIOTIN SYNTHASE, MITOCHONDRIAL"/>
    <property type="match status" value="1"/>
</dbReference>
<dbReference type="Pfam" id="PF06968">
    <property type="entry name" value="BATS"/>
    <property type="match status" value="1"/>
</dbReference>
<dbReference type="Pfam" id="PF04055">
    <property type="entry name" value="Radical_SAM"/>
    <property type="match status" value="1"/>
</dbReference>
<dbReference type="PIRSF" id="PIRSF001619">
    <property type="entry name" value="Biotin_synth"/>
    <property type="match status" value="1"/>
</dbReference>
<dbReference type="SFLD" id="SFLDF00272">
    <property type="entry name" value="biotin_synthase"/>
    <property type="match status" value="1"/>
</dbReference>
<dbReference type="SFLD" id="SFLDG01278">
    <property type="entry name" value="biotin_synthase_like"/>
    <property type="match status" value="1"/>
</dbReference>
<dbReference type="SMART" id="SM00876">
    <property type="entry name" value="BATS"/>
    <property type="match status" value="1"/>
</dbReference>
<dbReference type="SMART" id="SM00729">
    <property type="entry name" value="Elp3"/>
    <property type="match status" value="1"/>
</dbReference>
<dbReference type="SUPFAM" id="SSF102114">
    <property type="entry name" value="Radical SAM enzymes"/>
    <property type="match status" value="1"/>
</dbReference>
<dbReference type="PROSITE" id="PS51918">
    <property type="entry name" value="RADICAL_SAM"/>
    <property type="match status" value="1"/>
</dbReference>
<keyword id="KW-0001">2Fe-2S</keyword>
<keyword id="KW-0004">4Fe-4S</keyword>
<keyword id="KW-0093">Biotin biosynthesis</keyword>
<keyword id="KW-0408">Iron</keyword>
<keyword id="KW-0411">Iron-sulfur</keyword>
<keyword id="KW-0479">Metal-binding</keyword>
<keyword id="KW-1185">Reference proteome</keyword>
<keyword id="KW-0949">S-adenosyl-L-methionine</keyword>
<keyword id="KW-0808">Transferase</keyword>